<comment type="function">
    <text evidence="1 2">Zinc-finger RNA-binding protein that destabilizes numerous cytoplasmic AU-rich element (ARE)-containing mRNA transcripts by promoting their poly(A) tail removal or deadenylation, and hence provide a mechanism for attenuating protein synthesis. Acts as an 3'-untranslated region (UTR) ARE mRNA-binding adapter protein to communicate signaling events to the mRNA decay machinery. Recruits deadenylase CNOT7 (and probably the CCR4-NOT complex) via association with CNOT1, and hence promotes ARE-mediated mRNA deadenylation. Also functions by recruiting components of the cytoplasmic RNA decay machinery to the bound ARE-containing mRNAs. Self regulates by destabilizing its own mRNA. Binds to 3'-UTR ARE of numerous mRNAs. Also binds to ARE of its own mRNA. Plays a role in anti-inflammatory responses; suppresses tumor necrosis factor (TNF)-alpha production by stimulating ARE-mediated TNF-alpha mRNA decay and several other inflammatory ARE-containing mRNAs in interferon (IFN)- and/or lipopolysaccharide (LPS)-induced macrophages. Also plays a role in the regulation of dendritic cell maturation at the post-transcriptional level, and hence operates as part of a negative feedback loop to limit the inflammatory response. Promotes ARE-mediated mRNA decay of hypoxia-inducible factor HIF1A mRNA during the response of endothelial cells to hypoxia. Positively regulates early adipogenesis of preadipocytes by promoting ARE-mediated mRNA decay of immediate early genes (IEGs). Negatively regulates hematopoietic/erythroid cell differentiation by promoting ARE-mediated mRNA decay of the transcription factor STAT5B mRNA. Plays a role in maintaining skeletal muscle satellite cell quiescence by promoting ARE-mediated mRNA decay of the myogenic determination factor MYOD1 mRNA. Also associates with and regulates the expression of non-ARE-containing target mRNAs at the post-transcriptional level, such as MHC class I mRNAs. Participates in association with argonaute RISC catalytic components in the ARE-mediated mRNA decay mechanism; assists microRNA (miRNA) targeting ARE-containing mRNAs. May also play a role in the regulation of cytoplasmic mRNA decapping; enhances decapping of ARE-containing RNAs, in vitro. Involved in the delivery of target ARE-mRNAs to processing bodies (PBs). In addition to its cytosolic mRNA-decay function, affects nuclear pre-mRNA processing. Negatively regulates nuclear poly(A)-binding protein PABPN1-stimulated polyadenylation activity on ARE-containing pre-mRNA during LPS-stimulated macrophages. Also involved in the regulation of stress granule (SG) and P-body (PB) formation and fusion. Plays a role in the regulation of keratinocyte proliferation, differentiation and apoptosis. Plays a role as a tumor suppressor by inhibiting cell proliferation in breast cancer cells.</text>
</comment>
<comment type="subunit">
    <text evidence="1 2">Associates with cytoplasmic CCR4-NOT and PAN2-PAN3 deadenylase complexes to trigger ARE-containing mRNA deadenylation and decay processes. Part of a mRNA decay activation complex at least composed of poly(A)-specific exoribonucleases CNOT6, EXOSC2 and XRN1 and mRNA-decapping enzymes DCP1A and DCP2. Associates with the RNA exosome complex. Interacts (via phosphorylated form) with 14-3-3 proteins; these interactions promote exclusion of ZFP36 from cytoplasmic stress granules in response to arsenite treatment in a MAPKAPK2-dependent manner and does not prevent CCR4-NOT deadenylase complex recruitment or ZFP36-induced ARE-containing mRNA deadenylation and decay processes. Interacts with 14-3-3 proteins; these interactions occur in response to rapamycin in an Akt-dependent manner. Interacts with AGO2 and AGO4. Interacts (via C-terminus) with CNOT1; this interaction occurs in a RNA-independent manner and induces mRNA deadenylation. Interacts (via N-terminus) with CNOT6. Interacts with CNOT6L. Interacts (via C-terminus) with CNOT7; this interaction occurs in a RNA-independent manner, induces mRNA deadenylation and is inhibited in a phosphorylation MAPKAPK2-dependent manner. Interacts (via unphosphorylated form) with CNOT8; this interaction occurs in a RNA-independent manner and is inhibited in a phosphorylation MAPKAPK2-dependent manner. Interacts with DCP1A. Interacts (via N-terminus) with DCP2. Interacts with EDC3. Interacts (via N-terminus) with EXOSC2. Interacts with heat shock 70 kDa proteins. Interacts with KHSRP; this interaction increases upon cytokine-induced treatment. Interacts with MAP3K4; this interaction enhances the association with SH3KBP1/CIN85. Interacts with MAPKAPK2; this interaction occurs upon skeletal muscle satellite cell activation. Interacts with NCL. Interacts with NUP214; this interaction increases upon lipopolysaccharide (LPS) stimulation. Interacts with PABPC1; this interaction occurs in a RNA-dependent manner. Interacts (via hypophosphorylated form) with PABPN1 (via RRM domain and C-terminal arginine-rich region); this interaction occurs in the nucleus in a RNA-independent manner, decreases in presence of single-stranded poly(A) RNA-oligomer and in a p38 MAPK-dependent-manner and inhibits nuclear poly(A) tail synthesis. Interacts with PAN2. Interacts (via C3H1-type zinc finger domains) with PKM. Interacts (via C3H1-type zinc finger domains) with nuclear RNA poly(A) polymerase. Interacts with PPP2CA; this interaction occurs in LPS-stimulated cells and induces ZFP36 dephosphorylation, and hence may promote ARE-containing mRNAs decay. Interacts (via C-terminus) with PRR5L (via C-terminus); this interaction may accelerate ZFP36-mediated mRNA decay during stress. Interacts (via C-terminus) with SFN; this interaction occurs in a phosphorylation-dependent manner. Interacts (via extreme C-terminal region) with SH3KBP1/CIN85 (via SH3 domains); this interaction enhances MAP3K4-induced phosphorylation of ZFP36 at Ser-64 and Ser-91 and does not alter neither ZFP36 binding to ARE-containing transcripts nor TNF-alpha mRNA decay. Interacts with XRN1. Interacts (via C-terminus and Ser-184 phosphorylated form) with YWHAB; this interaction occurs in a p38/MAPKAPK2-dependent manner, increases cytoplasmic localization of ZFP36 and protects ZFP36 from Ser-184 dephosphorylation by serine/threonine phosphatase 2A, and hence may be crucial for stabilizing ARE-containing mRNAs. Interacts (via phosphorylated form) with YWHAE. Interacts (via C-terminus) with YWHAG; this interaction occurs in a phosphorylation-dependent manner. Interacts with YWHAH; this interaction occurs in a phosphorylation-dependent manner. Interacts with YWHAQ; this interaction occurs in a phosphorylation-dependent manner. Interacts with (via C-terminus) YWHAZ; this interaction occurs in a phosphorylation-dependent manner. Does not interact with SH3KBP1. Interacts (via P-P-P-P-G repeats) with GIGYF2; the interaction is direct (By similarity).</text>
</comment>
<comment type="subcellular location">
    <subcellularLocation>
        <location evidence="1">Nucleus</location>
    </subcellularLocation>
    <subcellularLocation>
        <location evidence="1">Cytoplasm</location>
    </subcellularLocation>
    <subcellularLocation>
        <location evidence="1">Cytoplasmic granule</location>
    </subcellularLocation>
    <subcellularLocation>
        <location evidence="1">Cytoplasm</location>
        <location evidence="1">P-body</location>
    </subcellularLocation>
    <text evidence="1 2">Shuttles between nucleus and cytoplasm in a CRM1-dependent manner. Localized predominantly in the cytoplasm in a p38 MAPK- and YWHAB-dependent manner. Colocalizes with SH3KBP1 and MAP3K4 in the cytoplasm. Component of cytoplasmic stress granules (SGs). Localizes to cytoplasmic stress granules upon energy starvation. Localizes in processing bodies (PBs). Excluded from stress granules in a phosphorylation MAPKAPK2-dependent manner. Shuttles in and out of both cytoplasmic P-body and SGs.</text>
</comment>
<comment type="induction">
    <text evidence="6">By stimulation with various mitogens.</text>
</comment>
<comment type="domain">
    <text evidence="2">The C3H1-type zinc finger domains are necessary for ARE-binding activity.</text>
</comment>
<comment type="PTM">
    <text evidence="1 2">Phosphorylated. Phosphorylation at serine and/or threonine residues occurs in a p38 MAPK- and MAPKAPK2-dependent manner. Phosphorylated by MAPKAPK2 at Ser-58 and Ser-184; phosphorylation increases its stability and cytoplasmic localization, promotes binding to 14-3-3 adapter proteins and inhibits the recruitment of cytoplasmic CCR4-NOT and PAN2-PAN3 deadenylase complexes to the mRNA decay machinery, thereby inhibiting ZFP36-induced ARE-containing mRNA deadenylation and decay processes. Phosphorylation by MAPKAPK2 does not impair ARE-containing RNA-binding. Phosphorylated in a MAPKAPK2- and p38 MAPK-dependent manner upon skeletal muscle satellite cell activation; this phosphorylation inhibits ZFP36-mediated mRNA decay activity, and hence stabilizes MYOD1 mRNA. Phosphorylated by MAPK1 upon mitogen stimulation. Phosphorylated at Ser-64 and Ser-91; these phosphorylations increase in a SH3KBP1-dependent manner. Phosphorylated at serine and threonine residues in a pyruvate kinase PKM- and p38 MAPK-dependent manner. Phosphorylation at Ser-58 may participate in the PKM-mediated degradation of ZFP36 in a p38 MAPK-dependent manner. Dephosphorylated by serine/threonine phosphatase 2A at Ser-184.</text>
</comment>
<comment type="PTM">
    <text evidence="2">Ubiquitinated; pyruvate kinase (PKM)-dependent ubiquitination leads to proteasomal degradation through a p38 MAPK signaling pathway.</text>
</comment>
<name>TTP_BOVIN</name>
<accession>P53781</accession>
<evidence type="ECO:0000250" key="1">
    <source>
        <dbReference type="UniProtKB" id="P22893"/>
    </source>
</evidence>
<evidence type="ECO:0000250" key="2">
    <source>
        <dbReference type="UniProtKB" id="P26651"/>
    </source>
</evidence>
<evidence type="ECO:0000250" key="3">
    <source>
        <dbReference type="UniProtKB" id="P47973"/>
    </source>
</evidence>
<evidence type="ECO:0000255" key="4">
    <source>
        <dbReference type="PROSITE-ProRule" id="PRU00723"/>
    </source>
</evidence>
<evidence type="ECO:0000256" key="5">
    <source>
        <dbReference type="SAM" id="MobiDB-lite"/>
    </source>
</evidence>
<evidence type="ECO:0000269" key="6">
    <source>
    </source>
</evidence>
<evidence type="ECO:0000305" key="7"/>
<reference key="1">
    <citation type="journal article" date="1995" name="J. Biol. Chem.">
        <title>Promoter analysis of Zfp-36, the mitogen-inducible gene encoding the zinc finger protein tristetraprolin.</title>
        <authorList>
            <person name="Lai W.S."/>
            <person name="Thompson M.J."/>
            <person name="Taylor G.A."/>
            <person name="Liu Y."/>
            <person name="Blackshear P.J."/>
        </authorList>
    </citation>
    <scope>NUCLEOTIDE SEQUENCE [GENOMIC DNA]</scope>
    <scope>INDUCTION</scope>
    <source>
        <tissue>Liver</tissue>
    </source>
</reference>
<protein>
    <recommendedName>
        <fullName evidence="7">mRNA decay activator protein ZFP36</fullName>
    </recommendedName>
    <alternativeName>
        <fullName evidence="2">Tristetraprolin</fullName>
        <shortName evidence="2">TTP</shortName>
    </alternativeName>
    <alternativeName>
        <fullName evidence="2">Zinc finger protein 36</fullName>
        <shortName evidence="1">Zfp-36</shortName>
    </alternativeName>
</protein>
<organism>
    <name type="scientific">Bos taurus</name>
    <name type="common">Bovine</name>
    <dbReference type="NCBI Taxonomy" id="9913"/>
    <lineage>
        <taxon>Eukaryota</taxon>
        <taxon>Metazoa</taxon>
        <taxon>Chordata</taxon>
        <taxon>Craniata</taxon>
        <taxon>Vertebrata</taxon>
        <taxon>Euteleostomi</taxon>
        <taxon>Mammalia</taxon>
        <taxon>Eutheria</taxon>
        <taxon>Laurasiatheria</taxon>
        <taxon>Artiodactyla</taxon>
        <taxon>Ruminantia</taxon>
        <taxon>Pecora</taxon>
        <taxon>Bovidae</taxon>
        <taxon>Bovinae</taxon>
        <taxon>Bos</taxon>
    </lineage>
</organism>
<sequence length="324" mass="34087">MDLAAIYKSLLSLSPELPSDLGETESSTSWASSGPWSLSSSDSSLPEVAARLPGRSTSLVEGRSCGWVPPPPGFAPLAPRPSSDWSPSPTSPTATPTTSSRYKTELCRTFSESGRCRYGAKCQFAHGLGELRQASRHPKYKTELCHKFYLQGRCPYGSRCHFIHNPSEDLAAPGHPHVLRQSISFSGLPSGRRTSPPPASLAGPSVSSWSFSPSSSPPPPPGDLLLSPSAFSAAPGHLCRRDPTPACCPSCRRATPNSVWGPVGGLARSPSAHSLGSDPDEYASSGTSLGGSDSPVFEAGVFGPPQPPAAPRRLPIFNRISVSE</sequence>
<keyword id="KW-0963">Cytoplasm</keyword>
<keyword id="KW-0217">Developmental protein</keyword>
<keyword id="KW-0238">DNA-binding</keyword>
<keyword id="KW-0271">Exosome</keyword>
<keyword id="KW-0479">Metal-binding</keyword>
<keyword id="KW-0509">mRNA transport</keyword>
<keyword id="KW-0539">Nucleus</keyword>
<keyword id="KW-0597">Phosphoprotein</keyword>
<keyword id="KW-1185">Reference proteome</keyword>
<keyword id="KW-0677">Repeat</keyword>
<keyword id="KW-0687">Ribonucleoprotein</keyword>
<keyword id="KW-0813">Transport</keyword>
<keyword id="KW-0832">Ubl conjugation</keyword>
<keyword id="KW-0862">Zinc</keyword>
<keyword id="KW-0863">Zinc-finger</keyword>
<gene>
    <name evidence="2" type="primary">ZFP36</name>
</gene>
<feature type="chain" id="PRO_0000089162" description="mRNA decay activator protein ZFP36">
    <location>
        <begin position="1"/>
        <end position="324"/>
    </location>
</feature>
<feature type="repeat" description="P-P-P-P-G">
    <location>
        <begin position="69"/>
        <end position="73"/>
    </location>
</feature>
<feature type="repeat" description="P-P-P-P-G">
    <location>
        <begin position="196"/>
        <end position="200"/>
    </location>
</feature>
<feature type="repeat" description="P-P-P-P-G">
    <location>
        <begin position="218"/>
        <end position="222"/>
    </location>
</feature>
<feature type="zinc finger region" description="C3H1-type 1" evidence="4">
    <location>
        <begin position="101"/>
        <end position="129"/>
    </location>
</feature>
<feature type="zinc finger region" description="C3H1-type 2" evidence="4">
    <location>
        <begin position="139"/>
        <end position="167"/>
    </location>
</feature>
<feature type="region of interest" description="Necessary for localization of ARE-containing mRNAs to processing bodies (PBs)" evidence="2">
    <location>
        <begin position="1"/>
        <end position="172"/>
    </location>
</feature>
<feature type="region of interest" description="Necessary and sufficient for the association with mRNA decay enzymes and mRNA decay activation" evidence="2">
    <location>
        <begin position="1"/>
        <end position="98"/>
    </location>
</feature>
<feature type="region of interest" description="Necessary for nuclear export" evidence="3">
    <location>
        <begin position="1"/>
        <end position="15"/>
    </location>
</feature>
<feature type="region of interest" description="Disordered" evidence="5">
    <location>
        <begin position="15"/>
        <end position="50"/>
    </location>
</feature>
<feature type="region of interest" description="Disordered" evidence="5">
    <location>
        <begin position="76"/>
        <end position="100"/>
    </location>
</feature>
<feature type="region of interest" description="Necessary for nuclear localization" evidence="3">
    <location>
        <begin position="93"/>
        <end position="166"/>
    </location>
</feature>
<feature type="region of interest" description="Necessary for RNA-binding" evidence="2">
    <location>
        <begin position="95"/>
        <end position="171"/>
    </location>
</feature>
<feature type="region of interest" description="Necessary for localization of ARE-containing mRNAs to processing bodies (PBs)" evidence="2">
    <location>
        <begin position="98"/>
        <end position="324"/>
    </location>
</feature>
<feature type="region of interest" description="Necessary for interaction with PABPN1" evidence="1">
    <location>
        <begin position="101"/>
        <end position="192"/>
    </location>
</feature>
<feature type="region of interest" description="Necessary for mRNA decay activation" evidence="2">
    <location>
        <begin position="172"/>
        <end position="324"/>
    </location>
</feature>
<feature type="region of interest" description="Disordered" evidence="5">
    <location>
        <begin position="185"/>
        <end position="227"/>
    </location>
</feature>
<feature type="region of interest" description="Disordered" evidence="5">
    <location>
        <begin position="270"/>
        <end position="324"/>
    </location>
</feature>
<feature type="region of interest" description="Interaction with CNOT1" evidence="2">
    <location>
        <begin position="310"/>
        <end position="324"/>
    </location>
</feature>
<feature type="compositionally biased region" description="Low complexity" evidence="5">
    <location>
        <begin position="15"/>
        <end position="46"/>
    </location>
</feature>
<feature type="compositionally biased region" description="Low complexity" evidence="5">
    <location>
        <begin position="204"/>
        <end position="214"/>
    </location>
</feature>
<feature type="modified residue" description="Phosphoserine; by MAPKAPK2" evidence="1">
    <location>
        <position position="58"/>
    </location>
</feature>
<feature type="modified residue" description="Phosphoserine" evidence="2">
    <location>
        <position position="64"/>
    </location>
</feature>
<feature type="modified residue" description="Phosphoserine" evidence="2">
    <location>
        <position position="86"/>
    </location>
</feature>
<feature type="modified residue" description="Phosphoserine" evidence="1">
    <location>
        <position position="88"/>
    </location>
</feature>
<feature type="modified residue" description="Phosphothreonine" evidence="2">
    <location>
        <position position="90"/>
    </location>
</feature>
<feature type="modified residue" description="Phosphoserine" evidence="2">
    <location>
        <position position="91"/>
    </location>
</feature>
<feature type="modified residue" description="Phosphoserine" evidence="2">
    <location>
        <position position="167"/>
    </location>
</feature>
<feature type="modified residue" description="Phosphoserine; by MAPKAPK2" evidence="2">
    <location>
        <position position="184"/>
    </location>
</feature>
<feature type="modified residue" description="Phosphoserine" evidence="2">
    <location>
        <position position="195"/>
    </location>
</feature>
<feature type="modified residue" description="Phosphoserine" evidence="2">
    <location>
        <position position="216"/>
    </location>
</feature>
<feature type="modified residue" description="Phosphoserine; by MAPK1; in vitro" evidence="2">
    <location>
        <position position="227"/>
    </location>
</feature>
<feature type="modified residue" description="Phosphoserine" evidence="2">
    <location>
        <position position="274"/>
    </location>
</feature>
<feature type="modified residue" description="Phosphoserine" evidence="2">
    <location>
        <position position="294"/>
    </location>
</feature>
<feature type="modified residue" description="Phosphoserine" evidence="2">
    <location>
        <position position="321"/>
    </location>
</feature>
<proteinExistence type="evidence at transcript level"/>
<dbReference type="EMBL" id="L42319">
    <property type="protein sequence ID" value="AAB05819.1"/>
    <property type="molecule type" value="Genomic_DNA"/>
</dbReference>
<dbReference type="RefSeq" id="NP_776918.1">
    <property type="nucleotide sequence ID" value="NM_174493.1"/>
</dbReference>
<dbReference type="SMR" id="P53781"/>
<dbReference type="FunCoup" id="P53781">
    <property type="interactions" value="221"/>
</dbReference>
<dbReference type="STRING" id="9913.ENSBTAP00000055077"/>
<dbReference type="PaxDb" id="9913-ENSBTAP00000055077"/>
<dbReference type="GeneID" id="282127"/>
<dbReference type="KEGG" id="bta:282127"/>
<dbReference type="CTD" id="7538"/>
<dbReference type="eggNOG" id="KOG1677">
    <property type="taxonomic scope" value="Eukaryota"/>
</dbReference>
<dbReference type="InParanoid" id="P53781"/>
<dbReference type="OrthoDB" id="410307at2759"/>
<dbReference type="Proteomes" id="UP000009136">
    <property type="component" value="Unplaced"/>
</dbReference>
<dbReference type="GO" id="GO:0005737">
    <property type="term" value="C:cytoplasm"/>
    <property type="evidence" value="ECO:0000250"/>
    <property type="project" value="UniProtKB"/>
</dbReference>
<dbReference type="GO" id="GO:0010494">
    <property type="term" value="C:cytoplasmic stress granule"/>
    <property type="evidence" value="ECO:0000250"/>
    <property type="project" value="UniProtKB"/>
</dbReference>
<dbReference type="GO" id="GO:0005634">
    <property type="term" value="C:nucleus"/>
    <property type="evidence" value="ECO:0000250"/>
    <property type="project" value="UniProtKB"/>
</dbReference>
<dbReference type="GO" id="GO:0000932">
    <property type="term" value="C:P-body"/>
    <property type="evidence" value="ECO:0000250"/>
    <property type="project" value="UniProtKB"/>
</dbReference>
<dbReference type="GO" id="GO:1990904">
    <property type="term" value="C:ribonucleoprotein complex"/>
    <property type="evidence" value="ECO:0000250"/>
    <property type="project" value="UniProtKB"/>
</dbReference>
<dbReference type="GO" id="GO:0071889">
    <property type="term" value="F:14-3-3 protein binding"/>
    <property type="evidence" value="ECO:0000250"/>
    <property type="project" value="UniProtKB"/>
</dbReference>
<dbReference type="GO" id="GO:0003677">
    <property type="term" value="F:DNA binding"/>
    <property type="evidence" value="ECO:0007669"/>
    <property type="project" value="UniProtKB-KW"/>
</dbReference>
<dbReference type="GO" id="GO:0031072">
    <property type="term" value="F:heat shock protein binding"/>
    <property type="evidence" value="ECO:0000250"/>
    <property type="project" value="UniProtKB"/>
</dbReference>
<dbReference type="GO" id="GO:0035925">
    <property type="term" value="F:mRNA 3'-UTR AU-rich region binding"/>
    <property type="evidence" value="ECO:0000250"/>
    <property type="project" value="UniProtKB"/>
</dbReference>
<dbReference type="GO" id="GO:0003730">
    <property type="term" value="F:mRNA 3'-UTR binding"/>
    <property type="evidence" value="ECO:0000250"/>
    <property type="project" value="UniProtKB"/>
</dbReference>
<dbReference type="GO" id="GO:0003729">
    <property type="term" value="F:mRNA binding"/>
    <property type="evidence" value="ECO:0000250"/>
    <property type="project" value="UniProtKB"/>
</dbReference>
<dbReference type="GO" id="GO:0070063">
    <property type="term" value="F:RNA polymerase binding"/>
    <property type="evidence" value="ECO:0000250"/>
    <property type="project" value="UniProtKB"/>
</dbReference>
<dbReference type="GO" id="GO:0008270">
    <property type="term" value="F:zinc ion binding"/>
    <property type="evidence" value="ECO:0007669"/>
    <property type="project" value="UniProtKB-KW"/>
</dbReference>
<dbReference type="GO" id="GO:0061158">
    <property type="term" value="P:3'-UTR-mediated mRNA destabilization"/>
    <property type="evidence" value="ECO:0000250"/>
    <property type="project" value="UniProtKB"/>
</dbReference>
<dbReference type="GO" id="GO:0070935">
    <property type="term" value="P:3'-UTR-mediated mRNA stabilization"/>
    <property type="evidence" value="ECO:0000250"/>
    <property type="project" value="UniProtKB"/>
</dbReference>
<dbReference type="GO" id="GO:0071364">
    <property type="term" value="P:cellular response to epidermal growth factor stimulus"/>
    <property type="evidence" value="ECO:0000250"/>
    <property type="project" value="UniProtKB"/>
</dbReference>
<dbReference type="GO" id="GO:0044344">
    <property type="term" value="P:cellular response to fibroblast growth factor stimulus"/>
    <property type="evidence" value="ECO:0000250"/>
    <property type="project" value="UniProtKB"/>
</dbReference>
<dbReference type="GO" id="GO:0071385">
    <property type="term" value="P:cellular response to glucocorticoid stimulus"/>
    <property type="evidence" value="ECO:0000250"/>
    <property type="project" value="UniProtKB"/>
</dbReference>
<dbReference type="GO" id="GO:0097011">
    <property type="term" value="P:cellular response to granulocyte macrophage colony-stimulating factor stimulus"/>
    <property type="evidence" value="ECO:0000250"/>
    <property type="project" value="UniProtKB"/>
</dbReference>
<dbReference type="GO" id="GO:0071222">
    <property type="term" value="P:cellular response to lipopolysaccharide"/>
    <property type="evidence" value="ECO:0000250"/>
    <property type="project" value="UniProtKB"/>
</dbReference>
<dbReference type="GO" id="GO:0071356">
    <property type="term" value="P:cellular response to tumor necrosis factor"/>
    <property type="evidence" value="ECO:0000250"/>
    <property type="project" value="UniProtKB"/>
</dbReference>
<dbReference type="GO" id="GO:0000165">
    <property type="term" value="P:MAPK cascade"/>
    <property type="evidence" value="ECO:0000250"/>
    <property type="project" value="UniProtKB"/>
</dbReference>
<dbReference type="GO" id="GO:0035278">
    <property type="term" value="P:miRNA-mediated gene silencing by inhibition of translation"/>
    <property type="evidence" value="ECO:0000250"/>
    <property type="project" value="UniProtKB"/>
</dbReference>
<dbReference type="GO" id="GO:0006402">
    <property type="term" value="P:mRNA catabolic process"/>
    <property type="evidence" value="ECO:0000250"/>
    <property type="project" value="UniProtKB"/>
</dbReference>
<dbReference type="GO" id="GO:0051028">
    <property type="term" value="P:mRNA transport"/>
    <property type="evidence" value="ECO:0000250"/>
    <property type="project" value="UniProtKB"/>
</dbReference>
<dbReference type="GO" id="GO:0045647">
    <property type="term" value="P:negative regulation of erythrocyte differentiation"/>
    <property type="evidence" value="ECO:0000250"/>
    <property type="project" value="UniProtKB"/>
</dbReference>
<dbReference type="GO" id="GO:0032703">
    <property type="term" value="P:negative regulation of interleukin-2 production"/>
    <property type="evidence" value="ECO:0000250"/>
    <property type="project" value="UniProtKB"/>
</dbReference>
<dbReference type="GO" id="GO:1904246">
    <property type="term" value="P:negative regulation of polynucleotide adenylyltransferase activity"/>
    <property type="evidence" value="ECO:0000250"/>
    <property type="project" value="UniProtKB"/>
</dbReference>
<dbReference type="GO" id="GO:0032897">
    <property type="term" value="P:negative regulation of viral transcription"/>
    <property type="evidence" value="ECO:0000250"/>
    <property type="project" value="UniProtKB"/>
</dbReference>
<dbReference type="GO" id="GO:0031086">
    <property type="term" value="P:nuclear-transcribed mRNA catabolic process, deadenylation-independent decay"/>
    <property type="evidence" value="ECO:0000250"/>
    <property type="project" value="UniProtKB"/>
</dbReference>
<dbReference type="GO" id="GO:0038066">
    <property type="term" value="P:p38MAPK cascade"/>
    <property type="evidence" value="ECO:0000250"/>
    <property type="project" value="UniProtKB"/>
</dbReference>
<dbReference type="GO" id="GO:1901835">
    <property type="term" value="P:positive regulation of deadenylation-independent decapping of nuclear-transcribed mRNA"/>
    <property type="evidence" value="ECO:0000250"/>
    <property type="project" value="UniProtKB"/>
</dbReference>
<dbReference type="GO" id="GO:0045600">
    <property type="term" value="P:positive regulation of fat cell differentiation"/>
    <property type="evidence" value="ECO:0000250"/>
    <property type="project" value="UniProtKB"/>
</dbReference>
<dbReference type="GO" id="GO:1904582">
    <property type="term" value="P:positive regulation of intracellular mRNA localization"/>
    <property type="evidence" value="ECO:0000250"/>
    <property type="project" value="UniProtKB"/>
</dbReference>
<dbReference type="GO" id="GO:2000637">
    <property type="term" value="P:positive regulation of miRNA-mediated gene silencing"/>
    <property type="evidence" value="ECO:0000250"/>
    <property type="project" value="UniProtKB"/>
</dbReference>
<dbReference type="GO" id="GO:0061014">
    <property type="term" value="P:positive regulation of mRNA catabolic process"/>
    <property type="evidence" value="ECO:0000250"/>
    <property type="project" value="UniProtKB"/>
</dbReference>
<dbReference type="GO" id="GO:1900153">
    <property type="term" value="P:positive regulation of nuclear-transcribed mRNA catabolic process, deadenylation-dependent decay"/>
    <property type="evidence" value="ECO:0000250"/>
    <property type="project" value="UniProtKB"/>
</dbReference>
<dbReference type="GO" id="GO:0060213">
    <property type="term" value="P:positive regulation of nuclear-transcribed mRNA poly(A) tail shortening"/>
    <property type="evidence" value="ECO:0000250"/>
    <property type="project" value="UniProtKB"/>
</dbReference>
<dbReference type="GO" id="GO:1902172">
    <property type="term" value="P:regulation of keratinocyte apoptotic process"/>
    <property type="evidence" value="ECO:0000250"/>
    <property type="project" value="UniProtKB"/>
</dbReference>
<dbReference type="GO" id="GO:0045616">
    <property type="term" value="P:regulation of keratinocyte differentiation"/>
    <property type="evidence" value="ECO:0000250"/>
    <property type="project" value="UniProtKB"/>
</dbReference>
<dbReference type="GO" id="GO:0010837">
    <property type="term" value="P:regulation of keratinocyte proliferation"/>
    <property type="evidence" value="ECO:0000250"/>
    <property type="project" value="UniProtKB"/>
</dbReference>
<dbReference type="GO" id="GO:0043488">
    <property type="term" value="P:regulation of mRNA stability"/>
    <property type="evidence" value="ECO:0000250"/>
    <property type="project" value="UniProtKB"/>
</dbReference>
<dbReference type="GO" id="GO:0032680">
    <property type="term" value="P:regulation of tumor necrosis factor production"/>
    <property type="evidence" value="ECO:0000250"/>
    <property type="project" value="UniProtKB"/>
</dbReference>
<dbReference type="GO" id="GO:0042594">
    <property type="term" value="P:response to starvation"/>
    <property type="evidence" value="ECO:0000250"/>
    <property type="project" value="UniProtKB"/>
</dbReference>
<dbReference type="GO" id="GO:0009611">
    <property type="term" value="P:response to wounding"/>
    <property type="evidence" value="ECO:0000250"/>
    <property type="project" value="UniProtKB"/>
</dbReference>
<dbReference type="FunFam" id="4.10.1000.10:FF:000001">
    <property type="entry name" value="zinc finger CCCH domain-containing protein 15-like"/>
    <property type="match status" value="1"/>
</dbReference>
<dbReference type="FunFam" id="4.10.1000.10:FF:000002">
    <property type="entry name" value="Zinc finger protein 36, C3H1 type-like 1"/>
    <property type="match status" value="1"/>
</dbReference>
<dbReference type="Gene3D" id="4.10.1000.10">
    <property type="entry name" value="Zinc finger, CCCH-type"/>
    <property type="match status" value="2"/>
</dbReference>
<dbReference type="InterPro" id="IPR045877">
    <property type="entry name" value="ZFP36-like"/>
</dbReference>
<dbReference type="InterPro" id="IPR000571">
    <property type="entry name" value="Znf_CCCH"/>
</dbReference>
<dbReference type="InterPro" id="IPR036855">
    <property type="entry name" value="Znf_CCCH_sf"/>
</dbReference>
<dbReference type="PANTHER" id="PTHR12547">
    <property type="entry name" value="CCCH ZINC FINGER/TIS11-RELATED"/>
    <property type="match status" value="1"/>
</dbReference>
<dbReference type="PANTHER" id="PTHR12547:SF58">
    <property type="entry name" value="MRNA DECAY ACTIVATOR PROTEIN ZFP36"/>
    <property type="match status" value="1"/>
</dbReference>
<dbReference type="Pfam" id="PF00642">
    <property type="entry name" value="zf-CCCH"/>
    <property type="match status" value="2"/>
</dbReference>
<dbReference type="SMART" id="SM00356">
    <property type="entry name" value="ZnF_C3H1"/>
    <property type="match status" value="2"/>
</dbReference>
<dbReference type="SUPFAM" id="SSF90229">
    <property type="entry name" value="CCCH zinc finger"/>
    <property type="match status" value="2"/>
</dbReference>
<dbReference type="PROSITE" id="PS50103">
    <property type="entry name" value="ZF_C3H1"/>
    <property type="match status" value="2"/>
</dbReference>